<feature type="chain" id="PRO_0000076939" description="Galectin-6">
    <location>
        <begin position="1"/>
        <end position="301"/>
    </location>
</feature>
<feature type="domain" description="Galectin 1" evidence="1">
    <location>
        <begin position="19"/>
        <end position="149"/>
    </location>
</feature>
<feature type="domain" description="Galectin 2" evidence="1">
    <location>
        <begin position="173"/>
        <end position="301"/>
    </location>
</feature>
<feature type="sequence conflict" description="In Ref. 2; AAC27244." evidence="2" ref="2">
    <original>A</original>
    <variation>V</variation>
    <location>
        <position position="154"/>
    </location>
</feature>
<evidence type="ECO:0000255" key="1">
    <source>
        <dbReference type="PROSITE-ProRule" id="PRU00639"/>
    </source>
</evidence>
<evidence type="ECO:0000305" key="2"/>
<accession>O54891</accession>
<accession>O88352</accession>
<keyword id="KW-0430">Lectin</keyword>
<keyword id="KW-1185">Reference proteome</keyword>
<keyword id="KW-0677">Repeat</keyword>
<name>LEG6_MOUSE</name>
<gene>
    <name type="primary">Lgals6</name>
</gene>
<comment type="domain">
    <text>Contains two homologous but distinct carbohydrate-binding domains.</text>
</comment>
<comment type="online information" name="Functional Glycomics Gateway - Glycan Binding">
    <link uri="http://www.functionalglycomics.org/glycomics/GBPServlet?&amp;operationType=view&amp;cbpId=cbp_mou_Stlect_201"/>
    <text>Galectin-6</text>
</comment>
<reference key="1">
    <citation type="journal article" date="1998" name="J. Biol. Chem.">
        <title>Galectin-4 and galectin-6 are two closely related lectins expressed in mouse gastrointestinal tract.</title>
        <authorList>
            <person name="Gitt M.A."/>
            <person name="Colnot C."/>
            <person name="Poirier F."/>
            <person name="Nani K.J."/>
            <person name="Barondes S.H."/>
            <person name="Leffler H."/>
        </authorList>
    </citation>
    <scope>NUCLEOTIDE SEQUENCE [MRNA]</scope>
    <source>
        <strain>129/Sv</strain>
    </source>
</reference>
<reference key="2">
    <citation type="journal article" date="1998" name="J. Biol. Chem.">
        <title>Sequence, structure, and chromosomal mapping of the mouse Lgals6 gene, encoding galectin-6.</title>
        <authorList>
            <person name="Gitt M.A."/>
            <person name="Xia Y.-R."/>
            <person name="Atchison R.E."/>
            <person name="Lusis A.J."/>
            <person name="Barondes S.H."/>
            <person name="Leffler H."/>
        </authorList>
    </citation>
    <scope>NUCLEOTIDE SEQUENCE [GENOMIC DNA]</scope>
    <source>
        <strain>129/Sv</strain>
    </source>
</reference>
<protein>
    <recommendedName>
        <fullName>Galectin-6</fullName>
        <shortName>Gal-6</shortName>
    </recommendedName>
</protein>
<dbReference type="EMBL" id="AF026799">
    <property type="protein sequence ID" value="AAC04508.1"/>
    <property type="molecule type" value="Genomic_DNA"/>
</dbReference>
<dbReference type="EMBL" id="AF026796">
    <property type="protein sequence ID" value="AAC04508.1"/>
    <property type="status" value="JOINED"/>
    <property type="molecule type" value="Genomic_DNA"/>
</dbReference>
<dbReference type="EMBL" id="AF026797">
    <property type="protein sequence ID" value="AAC04508.1"/>
    <property type="status" value="JOINED"/>
    <property type="molecule type" value="Genomic_DNA"/>
</dbReference>
<dbReference type="EMBL" id="AF026798">
    <property type="protein sequence ID" value="AAC04508.1"/>
    <property type="status" value="JOINED"/>
    <property type="molecule type" value="Genomic_DNA"/>
</dbReference>
<dbReference type="EMBL" id="AF026794">
    <property type="protein sequence ID" value="AAC27244.1"/>
    <property type="molecule type" value="mRNA"/>
</dbReference>
<dbReference type="RefSeq" id="NP_034837.2">
    <property type="nucleotide sequence ID" value="NM_010707.3"/>
</dbReference>
<dbReference type="SMR" id="O54891"/>
<dbReference type="FunCoup" id="O54891">
    <property type="interactions" value="60"/>
</dbReference>
<dbReference type="GlyGen" id="O54891">
    <property type="glycosylation" value="2 sites"/>
</dbReference>
<dbReference type="jPOST" id="O54891"/>
<dbReference type="PeptideAtlas" id="O54891"/>
<dbReference type="ProteomicsDB" id="264934"/>
<dbReference type="DNASU" id="16857"/>
<dbReference type="GeneID" id="16857"/>
<dbReference type="KEGG" id="mmu:16857"/>
<dbReference type="UCSC" id="uc009gad.2">
    <property type="organism name" value="mouse"/>
</dbReference>
<dbReference type="AGR" id="MGI:107535"/>
<dbReference type="CTD" id="16857"/>
<dbReference type="MGI" id="MGI:107535">
    <property type="gene designation" value="Lgals6"/>
</dbReference>
<dbReference type="InParanoid" id="O54891"/>
<dbReference type="PhylomeDB" id="O54891"/>
<dbReference type="BioGRID-ORCS" id="16857">
    <property type="hits" value="0 hits in 17 CRISPR screens"/>
</dbReference>
<dbReference type="PRO" id="PR:O54891"/>
<dbReference type="Proteomes" id="UP000000589">
    <property type="component" value="Unplaced"/>
</dbReference>
<dbReference type="RNAct" id="O54891">
    <property type="molecule type" value="protein"/>
</dbReference>
<dbReference type="GO" id="GO:0030246">
    <property type="term" value="F:carbohydrate binding"/>
    <property type="evidence" value="ECO:0007669"/>
    <property type="project" value="UniProtKB-KW"/>
</dbReference>
<dbReference type="GO" id="GO:0002780">
    <property type="term" value="P:antibacterial peptide biosynthetic process"/>
    <property type="evidence" value="ECO:0000314"/>
    <property type="project" value="MGI"/>
</dbReference>
<dbReference type="GO" id="GO:0042742">
    <property type="term" value="P:defense response to bacterium"/>
    <property type="evidence" value="ECO:0000314"/>
    <property type="project" value="MGI"/>
</dbReference>
<dbReference type="CDD" id="cd00070">
    <property type="entry name" value="GLECT"/>
    <property type="match status" value="2"/>
</dbReference>
<dbReference type="FunFam" id="2.60.120.200:FF:000124">
    <property type="entry name" value="Galectin-4"/>
    <property type="match status" value="2"/>
</dbReference>
<dbReference type="Gene3D" id="2.60.120.200">
    <property type="match status" value="2"/>
</dbReference>
<dbReference type="InterPro" id="IPR013320">
    <property type="entry name" value="ConA-like_dom_sf"/>
</dbReference>
<dbReference type="InterPro" id="IPR044156">
    <property type="entry name" value="Galectin-like"/>
</dbReference>
<dbReference type="InterPro" id="IPR001079">
    <property type="entry name" value="Galectin_CRD"/>
</dbReference>
<dbReference type="PANTHER" id="PTHR11346">
    <property type="entry name" value="GALECTIN"/>
    <property type="match status" value="1"/>
</dbReference>
<dbReference type="PANTHER" id="PTHR11346:SF32">
    <property type="entry name" value="GALECTIN-4"/>
    <property type="match status" value="1"/>
</dbReference>
<dbReference type="Pfam" id="PF00337">
    <property type="entry name" value="Gal-bind_lectin"/>
    <property type="match status" value="2"/>
</dbReference>
<dbReference type="SMART" id="SM00908">
    <property type="entry name" value="Gal-bind_lectin"/>
    <property type="match status" value="2"/>
</dbReference>
<dbReference type="SMART" id="SM00276">
    <property type="entry name" value="GLECT"/>
    <property type="match status" value="2"/>
</dbReference>
<dbReference type="SUPFAM" id="SSF49899">
    <property type="entry name" value="Concanavalin A-like lectins/glucanases"/>
    <property type="match status" value="2"/>
</dbReference>
<dbReference type="PROSITE" id="PS51304">
    <property type="entry name" value="GALECTIN"/>
    <property type="match status" value="2"/>
</dbReference>
<organism>
    <name type="scientific">Mus musculus</name>
    <name type="common">Mouse</name>
    <dbReference type="NCBI Taxonomy" id="10090"/>
    <lineage>
        <taxon>Eukaryota</taxon>
        <taxon>Metazoa</taxon>
        <taxon>Chordata</taxon>
        <taxon>Craniata</taxon>
        <taxon>Vertebrata</taxon>
        <taxon>Euteleostomi</taxon>
        <taxon>Mammalia</taxon>
        <taxon>Eutheria</taxon>
        <taxon>Euarchontoglires</taxon>
        <taxon>Glires</taxon>
        <taxon>Rodentia</taxon>
        <taxon>Myomorpha</taxon>
        <taxon>Muroidea</taxon>
        <taxon>Muridae</taxon>
        <taxon>Murinae</taxon>
        <taxon>Mus</taxon>
        <taxon>Mus</taxon>
    </lineage>
</organism>
<sequence length="301" mass="34112">MAYVPAPGYQPTYNPTLPYKRPIPGGLSVGMSFYIQGTAKENMRRFHVNFAVGQDDGADVAFHFNPRFDGWDKVVFNTKQSGRWGKEEEKSMPFQKGKHFELVFMVMPEHYKVVVNGSPFYEYGHRLPVQMVTHLQVDGDLELQSINFFGVQPAETKYPAMTGPPVFNPCLPYVGALQGGFTVRRTIIIKGYVLPTAKTFAINFRVGSSEDIALHINPRIGDCLVRNSYMNGSWGTEERMVAYNPFGPGQFFDLSIRCGMDRFKVFANGIHLFNFSHRFQALRKINTLEINGDLTLSYVHI</sequence>
<proteinExistence type="evidence at transcript level"/>